<protein>
    <recommendedName>
        <fullName evidence="1">Large ribosomal subunit protein bL17</fullName>
    </recommendedName>
    <alternativeName>
        <fullName evidence="2">50S ribosomal protein L17</fullName>
    </alternativeName>
</protein>
<organism>
    <name type="scientific">Yersinia pestis</name>
    <dbReference type="NCBI Taxonomy" id="632"/>
    <lineage>
        <taxon>Bacteria</taxon>
        <taxon>Pseudomonadati</taxon>
        <taxon>Pseudomonadota</taxon>
        <taxon>Gammaproteobacteria</taxon>
        <taxon>Enterobacterales</taxon>
        <taxon>Yersiniaceae</taxon>
        <taxon>Yersinia</taxon>
    </lineage>
</organism>
<evidence type="ECO:0000255" key="1">
    <source>
        <dbReference type="HAMAP-Rule" id="MF_01368"/>
    </source>
</evidence>
<evidence type="ECO:0000305" key="2"/>
<feature type="chain" id="PRO_0000267973" description="Large ribosomal subunit protein bL17">
    <location>
        <begin position="1"/>
        <end position="129"/>
    </location>
</feature>
<proteinExistence type="inferred from homology"/>
<name>RL17_YERPE</name>
<accession>Q7CFS8</accession>
<accession>Q74XY1</accession>
<comment type="subunit">
    <text evidence="1">Part of the 50S ribosomal subunit. Contacts protein L32.</text>
</comment>
<comment type="similarity">
    <text evidence="1">Belongs to the bacterial ribosomal protein bL17 family.</text>
</comment>
<keyword id="KW-1185">Reference proteome</keyword>
<keyword id="KW-0687">Ribonucleoprotein</keyword>
<keyword id="KW-0689">Ribosomal protein</keyword>
<sequence>MRHRKSGRQLNRNSSHRQAMFRNMAGSLVRHEIIKTTLPKAKELRRVVEPLITLAKTDNVANRRLAFARTRDNEIVAKLFNELGPRFASRAGGYTRILKCGFRAGDNAPMAYIELVDRAASQAEVVAAE</sequence>
<reference key="1">
    <citation type="journal article" date="2002" name="J. Bacteriol.">
        <title>Genome sequence of Yersinia pestis KIM.</title>
        <authorList>
            <person name="Deng W."/>
            <person name="Burland V."/>
            <person name="Plunkett G. III"/>
            <person name="Boutin A."/>
            <person name="Mayhew G.F."/>
            <person name="Liss P."/>
            <person name="Perna N.T."/>
            <person name="Rose D.J."/>
            <person name="Mau B."/>
            <person name="Zhou S."/>
            <person name="Schwartz D.C."/>
            <person name="Fetherston J.D."/>
            <person name="Lindler L.E."/>
            <person name="Brubaker R.R."/>
            <person name="Plano G.V."/>
            <person name="Straley S.C."/>
            <person name="McDonough K.A."/>
            <person name="Nilles M.L."/>
            <person name="Matson J.S."/>
            <person name="Blattner F.R."/>
            <person name="Perry R.D."/>
        </authorList>
    </citation>
    <scope>NUCLEOTIDE SEQUENCE [LARGE SCALE GENOMIC DNA]</scope>
    <source>
        <strain>KIM10+ / Biovar Mediaevalis</strain>
    </source>
</reference>
<reference key="2">
    <citation type="journal article" date="2001" name="Nature">
        <title>Genome sequence of Yersinia pestis, the causative agent of plague.</title>
        <authorList>
            <person name="Parkhill J."/>
            <person name="Wren B.W."/>
            <person name="Thomson N.R."/>
            <person name="Titball R.W."/>
            <person name="Holden M.T.G."/>
            <person name="Prentice M.B."/>
            <person name="Sebaihia M."/>
            <person name="James K.D."/>
            <person name="Churcher C.M."/>
            <person name="Mungall K.L."/>
            <person name="Baker S."/>
            <person name="Basham D."/>
            <person name="Bentley S.D."/>
            <person name="Brooks K."/>
            <person name="Cerdeno-Tarraga A.-M."/>
            <person name="Chillingworth T."/>
            <person name="Cronin A."/>
            <person name="Davies R.M."/>
            <person name="Davis P."/>
            <person name="Dougan G."/>
            <person name="Feltwell T."/>
            <person name="Hamlin N."/>
            <person name="Holroyd S."/>
            <person name="Jagels K."/>
            <person name="Karlyshev A.V."/>
            <person name="Leather S."/>
            <person name="Moule S."/>
            <person name="Oyston P.C.F."/>
            <person name="Quail M.A."/>
            <person name="Rutherford K.M."/>
            <person name="Simmonds M."/>
            <person name="Skelton J."/>
            <person name="Stevens K."/>
            <person name="Whitehead S."/>
            <person name="Barrell B.G."/>
        </authorList>
    </citation>
    <scope>NUCLEOTIDE SEQUENCE [LARGE SCALE GENOMIC DNA]</scope>
    <source>
        <strain>CO-92 / Biovar Orientalis</strain>
    </source>
</reference>
<reference key="3">
    <citation type="journal article" date="2004" name="DNA Res.">
        <title>Complete genome sequence of Yersinia pestis strain 91001, an isolate avirulent to humans.</title>
        <authorList>
            <person name="Song Y."/>
            <person name="Tong Z."/>
            <person name="Wang J."/>
            <person name="Wang L."/>
            <person name="Guo Z."/>
            <person name="Han Y."/>
            <person name="Zhang J."/>
            <person name="Pei D."/>
            <person name="Zhou D."/>
            <person name="Qin H."/>
            <person name="Pang X."/>
            <person name="Han Y."/>
            <person name="Zhai J."/>
            <person name="Li M."/>
            <person name="Cui B."/>
            <person name="Qi Z."/>
            <person name="Jin L."/>
            <person name="Dai R."/>
            <person name="Chen F."/>
            <person name="Li S."/>
            <person name="Ye C."/>
            <person name="Du Z."/>
            <person name="Lin W."/>
            <person name="Wang J."/>
            <person name="Yu J."/>
            <person name="Yang H."/>
            <person name="Wang J."/>
            <person name="Huang P."/>
            <person name="Yang R."/>
        </authorList>
    </citation>
    <scope>NUCLEOTIDE SEQUENCE [LARGE SCALE GENOMIC DNA]</scope>
    <source>
        <strain>91001 / Biovar Mediaevalis</strain>
    </source>
</reference>
<dbReference type="EMBL" id="AE009952">
    <property type="protein sequence ID" value="AAM87560.1"/>
    <property type="molecule type" value="Genomic_DNA"/>
</dbReference>
<dbReference type="EMBL" id="AL590842">
    <property type="protein sequence ID" value="CAL18918.1"/>
    <property type="molecule type" value="Genomic_DNA"/>
</dbReference>
<dbReference type="EMBL" id="AE017042">
    <property type="protein sequence ID" value="AAS60509.1"/>
    <property type="molecule type" value="Genomic_DNA"/>
</dbReference>
<dbReference type="PIR" id="AD0029">
    <property type="entry name" value="AD0029"/>
</dbReference>
<dbReference type="RefSeq" id="WP_002209014.1">
    <property type="nucleotide sequence ID" value="NZ_WUCM01000078.1"/>
</dbReference>
<dbReference type="RefSeq" id="YP_002345316.1">
    <property type="nucleotide sequence ID" value="NC_003143.1"/>
</dbReference>
<dbReference type="SMR" id="Q7CFS8"/>
<dbReference type="STRING" id="214092.YPO0235"/>
<dbReference type="PaxDb" id="214092-YPO0235"/>
<dbReference type="DNASU" id="1148963"/>
<dbReference type="EnsemblBacteria" id="AAS60509">
    <property type="protein sequence ID" value="AAS60509"/>
    <property type="gene ID" value="YP_0233"/>
</dbReference>
<dbReference type="GeneID" id="57974369"/>
<dbReference type="KEGG" id="ype:YPO0235"/>
<dbReference type="KEGG" id="ypk:y4016"/>
<dbReference type="KEGG" id="ypm:YP_0233"/>
<dbReference type="PATRIC" id="fig|214092.21.peg.463"/>
<dbReference type="eggNOG" id="COG0203">
    <property type="taxonomic scope" value="Bacteria"/>
</dbReference>
<dbReference type="HOGENOM" id="CLU_074407_2_0_6"/>
<dbReference type="OMA" id="EHKRINT"/>
<dbReference type="OrthoDB" id="9809073at2"/>
<dbReference type="Proteomes" id="UP000000815">
    <property type="component" value="Chromosome"/>
</dbReference>
<dbReference type="Proteomes" id="UP000001019">
    <property type="component" value="Chromosome"/>
</dbReference>
<dbReference type="Proteomes" id="UP000002490">
    <property type="component" value="Chromosome"/>
</dbReference>
<dbReference type="GO" id="GO:0022625">
    <property type="term" value="C:cytosolic large ribosomal subunit"/>
    <property type="evidence" value="ECO:0000318"/>
    <property type="project" value="GO_Central"/>
</dbReference>
<dbReference type="GO" id="GO:0003735">
    <property type="term" value="F:structural constituent of ribosome"/>
    <property type="evidence" value="ECO:0000318"/>
    <property type="project" value="GO_Central"/>
</dbReference>
<dbReference type="GO" id="GO:0006412">
    <property type="term" value="P:translation"/>
    <property type="evidence" value="ECO:0007669"/>
    <property type="project" value="UniProtKB-UniRule"/>
</dbReference>
<dbReference type="FunFam" id="3.90.1030.10:FF:000001">
    <property type="entry name" value="50S ribosomal protein L17"/>
    <property type="match status" value="1"/>
</dbReference>
<dbReference type="Gene3D" id="3.90.1030.10">
    <property type="entry name" value="Ribosomal protein L17"/>
    <property type="match status" value="1"/>
</dbReference>
<dbReference type="HAMAP" id="MF_01368">
    <property type="entry name" value="Ribosomal_bL17"/>
    <property type="match status" value="1"/>
</dbReference>
<dbReference type="InterPro" id="IPR000456">
    <property type="entry name" value="Ribosomal_bL17"/>
</dbReference>
<dbReference type="InterPro" id="IPR047859">
    <property type="entry name" value="Ribosomal_bL17_CS"/>
</dbReference>
<dbReference type="InterPro" id="IPR036373">
    <property type="entry name" value="Ribosomal_bL17_sf"/>
</dbReference>
<dbReference type="NCBIfam" id="TIGR00059">
    <property type="entry name" value="L17"/>
    <property type="match status" value="1"/>
</dbReference>
<dbReference type="PANTHER" id="PTHR14413:SF16">
    <property type="entry name" value="LARGE RIBOSOMAL SUBUNIT PROTEIN BL17M"/>
    <property type="match status" value="1"/>
</dbReference>
<dbReference type="PANTHER" id="PTHR14413">
    <property type="entry name" value="RIBOSOMAL PROTEIN L17"/>
    <property type="match status" value="1"/>
</dbReference>
<dbReference type="Pfam" id="PF01196">
    <property type="entry name" value="Ribosomal_L17"/>
    <property type="match status" value="1"/>
</dbReference>
<dbReference type="SUPFAM" id="SSF64263">
    <property type="entry name" value="Prokaryotic ribosomal protein L17"/>
    <property type="match status" value="1"/>
</dbReference>
<dbReference type="PROSITE" id="PS01167">
    <property type="entry name" value="RIBOSOMAL_L17"/>
    <property type="match status" value="1"/>
</dbReference>
<gene>
    <name evidence="1" type="primary">rplQ</name>
    <name type="ordered locus">YPO0235</name>
    <name type="ordered locus">y4016</name>
    <name type="ordered locus">YP_0233</name>
</gene>